<feature type="chain" id="PRO_1000013276" description="Large ribosomal subunit protein bL34">
    <location>
        <begin position="1"/>
        <end position="44"/>
    </location>
</feature>
<feature type="region of interest" description="Disordered" evidence="2">
    <location>
        <begin position="1"/>
        <end position="27"/>
    </location>
</feature>
<feature type="compositionally biased region" description="Basic residues" evidence="2">
    <location>
        <begin position="1"/>
        <end position="19"/>
    </location>
</feature>
<comment type="similarity">
    <text evidence="1">Belongs to the bacterial ribosomal protein bL34 family.</text>
</comment>
<proteinExistence type="inferred from homology"/>
<protein>
    <recommendedName>
        <fullName evidence="1">Large ribosomal subunit protein bL34</fullName>
    </recommendedName>
    <alternativeName>
        <fullName evidence="3">50S ribosomal protein L34</fullName>
    </alternativeName>
</protein>
<dbReference type="EMBL" id="CP000560">
    <property type="protein sequence ID" value="ABS76141.1"/>
    <property type="molecule type" value="Genomic_DNA"/>
</dbReference>
<dbReference type="RefSeq" id="WP_003178075.1">
    <property type="nucleotide sequence ID" value="NC_009725.2"/>
</dbReference>
<dbReference type="SMR" id="A7ZAW5"/>
<dbReference type="GeneID" id="93082950"/>
<dbReference type="KEGG" id="bay:RBAM_038160"/>
<dbReference type="HOGENOM" id="CLU_129938_2_0_9"/>
<dbReference type="Proteomes" id="UP000001120">
    <property type="component" value="Chromosome"/>
</dbReference>
<dbReference type="GO" id="GO:1990904">
    <property type="term" value="C:ribonucleoprotein complex"/>
    <property type="evidence" value="ECO:0007669"/>
    <property type="project" value="UniProtKB-KW"/>
</dbReference>
<dbReference type="GO" id="GO:0005840">
    <property type="term" value="C:ribosome"/>
    <property type="evidence" value="ECO:0007669"/>
    <property type="project" value="UniProtKB-KW"/>
</dbReference>
<dbReference type="GO" id="GO:0003735">
    <property type="term" value="F:structural constituent of ribosome"/>
    <property type="evidence" value="ECO:0007669"/>
    <property type="project" value="InterPro"/>
</dbReference>
<dbReference type="GO" id="GO:0006412">
    <property type="term" value="P:translation"/>
    <property type="evidence" value="ECO:0007669"/>
    <property type="project" value="UniProtKB-UniRule"/>
</dbReference>
<dbReference type="FunFam" id="1.10.287.3980:FF:000001">
    <property type="entry name" value="Mitochondrial ribosomal protein L34"/>
    <property type="match status" value="1"/>
</dbReference>
<dbReference type="Gene3D" id="1.10.287.3980">
    <property type="match status" value="1"/>
</dbReference>
<dbReference type="HAMAP" id="MF_00391">
    <property type="entry name" value="Ribosomal_bL34"/>
    <property type="match status" value="1"/>
</dbReference>
<dbReference type="InterPro" id="IPR000271">
    <property type="entry name" value="Ribosomal_bL34"/>
</dbReference>
<dbReference type="InterPro" id="IPR020939">
    <property type="entry name" value="Ribosomal_bL34_CS"/>
</dbReference>
<dbReference type="NCBIfam" id="TIGR01030">
    <property type="entry name" value="rpmH_bact"/>
    <property type="match status" value="1"/>
</dbReference>
<dbReference type="PANTHER" id="PTHR14503:SF4">
    <property type="entry name" value="LARGE RIBOSOMAL SUBUNIT PROTEIN BL34M"/>
    <property type="match status" value="1"/>
</dbReference>
<dbReference type="PANTHER" id="PTHR14503">
    <property type="entry name" value="MITOCHONDRIAL RIBOSOMAL PROTEIN 34 FAMILY MEMBER"/>
    <property type="match status" value="1"/>
</dbReference>
<dbReference type="Pfam" id="PF00468">
    <property type="entry name" value="Ribosomal_L34"/>
    <property type="match status" value="1"/>
</dbReference>
<dbReference type="PROSITE" id="PS00784">
    <property type="entry name" value="RIBOSOMAL_L34"/>
    <property type="match status" value="1"/>
</dbReference>
<organism>
    <name type="scientific">Bacillus velezensis (strain DSM 23117 / BGSC 10A6 / LMG 26770 / FZB42)</name>
    <name type="common">Bacillus amyloliquefaciens subsp. plantarum</name>
    <dbReference type="NCBI Taxonomy" id="326423"/>
    <lineage>
        <taxon>Bacteria</taxon>
        <taxon>Bacillati</taxon>
        <taxon>Bacillota</taxon>
        <taxon>Bacilli</taxon>
        <taxon>Bacillales</taxon>
        <taxon>Bacillaceae</taxon>
        <taxon>Bacillus</taxon>
        <taxon>Bacillus amyloliquefaciens group</taxon>
    </lineage>
</organism>
<reference key="1">
    <citation type="journal article" date="2007" name="Nat. Biotechnol.">
        <title>Comparative analysis of the complete genome sequence of the plant growth-promoting bacterium Bacillus amyloliquefaciens FZB42.</title>
        <authorList>
            <person name="Chen X.H."/>
            <person name="Koumoutsi A."/>
            <person name="Scholz R."/>
            <person name="Eisenreich A."/>
            <person name="Schneider K."/>
            <person name="Heinemeyer I."/>
            <person name="Morgenstern B."/>
            <person name="Voss B."/>
            <person name="Hess W.R."/>
            <person name="Reva O."/>
            <person name="Junge H."/>
            <person name="Voigt B."/>
            <person name="Jungblut P.R."/>
            <person name="Vater J."/>
            <person name="Suessmuth R."/>
            <person name="Liesegang H."/>
            <person name="Strittmatter A."/>
            <person name="Gottschalk G."/>
            <person name="Borriss R."/>
        </authorList>
    </citation>
    <scope>NUCLEOTIDE SEQUENCE [LARGE SCALE GENOMIC DNA]</scope>
    <source>
        <strain>DSM 23117 / BGSC 10A6 / LMG 26770 / FZB42</strain>
    </source>
</reference>
<sequence length="44" mass="5253">MKRTFQPNNRKRSKVHGFRSRMSSKNGRLVLARRRRKGRKVLSA</sequence>
<gene>
    <name evidence="1" type="primary">rpmH</name>
    <name type="ordered locus">RBAM_038160</name>
</gene>
<keyword id="KW-0687">Ribonucleoprotein</keyword>
<keyword id="KW-0689">Ribosomal protein</keyword>
<name>RL34_BACVZ</name>
<accession>A7ZAW5</accession>
<evidence type="ECO:0000255" key="1">
    <source>
        <dbReference type="HAMAP-Rule" id="MF_00391"/>
    </source>
</evidence>
<evidence type="ECO:0000256" key="2">
    <source>
        <dbReference type="SAM" id="MobiDB-lite"/>
    </source>
</evidence>
<evidence type="ECO:0000305" key="3"/>